<reference key="1">
    <citation type="journal article" date="2003" name="PLoS Biol.">
        <title>The genome sequence of Caenorhabditis briggsae: a platform for comparative genomics.</title>
        <authorList>
            <person name="Stein L.D."/>
            <person name="Bao Z."/>
            <person name="Blasiar D."/>
            <person name="Blumenthal T."/>
            <person name="Brent M.R."/>
            <person name="Chen N."/>
            <person name="Chinwalla A."/>
            <person name="Clarke L."/>
            <person name="Clee C."/>
            <person name="Coghlan A."/>
            <person name="Coulson A."/>
            <person name="D'Eustachio P."/>
            <person name="Fitch D.H.A."/>
            <person name="Fulton L.A."/>
            <person name="Fulton R.E."/>
            <person name="Griffiths-Jones S."/>
            <person name="Harris T.W."/>
            <person name="Hillier L.W."/>
            <person name="Kamath R."/>
            <person name="Kuwabara P.E."/>
            <person name="Mardis E.R."/>
            <person name="Marra M.A."/>
            <person name="Miner T.L."/>
            <person name="Minx P."/>
            <person name="Mullikin J.C."/>
            <person name="Plumb R.W."/>
            <person name="Rogers J."/>
            <person name="Schein J.E."/>
            <person name="Sohrmann M."/>
            <person name="Spieth J."/>
            <person name="Stajich J.E."/>
            <person name="Wei C."/>
            <person name="Willey D."/>
            <person name="Wilson R.K."/>
            <person name="Durbin R.M."/>
            <person name="Waterston R.H."/>
        </authorList>
    </citation>
    <scope>NUCLEOTIDE SEQUENCE [LARGE SCALE GENOMIC DNA]</scope>
    <source>
        <strain>AF16</strain>
    </source>
</reference>
<sequence>MNRGPPNPRMFKFQPNPKVKNRFQDEADLRSLRSFKTDFSNYLASDTNFLNVAEIMTSYAYGESNNANEKEIQCDLLTENGGIEIDPTRLSYRERIRWHLQQFCYKTSSHGIPMLGQAPNSLYRAVWVFLLLICAIQFINQAVAVIQKYQKMDKITDIQLKFDTAPFPAITLCNLNPYKDSVIRSHDSISKILGVFKSVMKKAGDSSAEASDDGVEYDMDGITIQAKRRKRGAGEKGTFEPANSACECDEEDGSNECEEKSTEKPSSDNDMCICAFDRQTNDAWPCHRREQWTNTTCQACDEHYLCSKKAKKGTKRSEIKKEPCICESKGLFCIKHEHAALVLNLWEYFGDTEEFSDISTEEREALGFGNMTDEVAIVTKAKENIIFAMSASEEQRILMSQAKHNLIHKCSFNGKPCDIDKDFELVADPTFGNCFVFNHDREIFKSSVRAGPQYGLRVMLFVNASDYLPTSEAVGIRLTIHDKDDFPFPDTFGYSAPTGYISSFGMRMKKMSRLPAPYGDCVEDGTTSNYIYKGYAYSTEGCYRTCFQELIIDRCGCSDPRFPSIGGVQPCQVFNKNHRECLEKHTHQIGEIHGSFKCRCQQPCNQTIYTTSYSEAIWPSQALNISLGHCEKEAEECNEEYKENAAMLEVFYEALNFEVLAESEAYGIVKMMADFGGHLGLWSGVSVMTCCEFVCLVLELLYMAVTHHITQERIRRRENAANEF</sequence>
<accession>Q60NC0</accession>
<accession>A8Y2V5</accession>
<name>MEC10_CAEBR</name>
<gene>
    <name evidence="1" type="primary">mec-10</name>
    <name type="ORF">CBG22775</name>
</gene>
<dbReference type="EMBL" id="HE601156">
    <property type="protein sequence ID" value="CAP39289.1"/>
    <property type="molecule type" value="Genomic_DNA"/>
</dbReference>
<dbReference type="FunCoup" id="Q60NC0">
    <property type="interactions" value="24"/>
</dbReference>
<dbReference type="STRING" id="6238.Q60NC0"/>
<dbReference type="GlyCosmos" id="Q60NC0">
    <property type="glycosylation" value="5 sites, No reported glycans"/>
</dbReference>
<dbReference type="EnsemblMetazoa" id="CBG22775.1">
    <property type="protein sequence ID" value="CBG22775.1"/>
    <property type="gene ID" value="WBGene00041260"/>
</dbReference>
<dbReference type="KEGG" id="cbr:CBG_22775"/>
<dbReference type="CTD" id="8587518"/>
<dbReference type="WormBase" id="CBG22775">
    <property type="protein sequence ID" value="CBP24993"/>
    <property type="gene ID" value="WBGene00041260"/>
    <property type="gene designation" value="Cbr-mec-10"/>
</dbReference>
<dbReference type="eggNOG" id="KOG4294">
    <property type="taxonomic scope" value="Eukaryota"/>
</dbReference>
<dbReference type="HOGENOM" id="CLU_017673_0_0_1"/>
<dbReference type="InParanoid" id="Q60NC0"/>
<dbReference type="OMA" id="MSQAKHN"/>
<dbReference type="Proteomes" id="UP000008549">
    <property type="component" value="Unassembled WGS sequence"/>
</dbReference>
<dbReference type="GO" id="GO:0044298">
    <property type="term" value="C:cell body membrane"/>
    <property type="evidence" value="ECO:0007669"/>
    <property type="project" value="EnsemblMetazoa"/>
</dbReference>
<dbReference type="GO" id="GO:0005886">
    <property type="term" value="C:plasma membrane"/>
    <property type="evidence" value="ECO:0000318"/>
    <property type="project" value="GO_Central"/>
</dbReference>
<dbReference type="GO" id="GO:0015280">
    <property type="term" value="F:ligand-gated sodium channel activity"/>
    <property type="evidence" value="ECO:0000318"/>
    <property type="project" value="GO_Central"/>
</dbReference>
<dbReference type="GO" id="GO:0050976">
    <property type="term" value="P:detection of mechanical stimulus involved in sensory perception of touch"/>
    <property type="evidence" value="ECO:0007669"/>
    <property type="project" value="EnsemblMetazoa"/>
</dbReference>
<dbReference type="GO" id="GO:0007638">
    <property type="term" value="P:mechanosensory behavior"/>
    <property type="evidence" value="ECO:0007669"/>
    <property type="project" value="EnsemblMetazoa"/>
</dbReference>
<dbReference type="GO" id="GO:1905789">
    <property type="term" value="P:positive regulation of detection of mechanical stimulus involved in sensory perception of touch"/>
    <property type="evidence" value="ECO:0007669"/>
    <property type="project" value="EnsemblMetazoa"/>
</dbReference>
<dbReference type="GO" id="GO:1905792">
    <property type="term" value="P:positive regulation of mechanosensory behavior"/>
    <property type="evidence" value="ECO:0007669"/>
    <property type="project" value="EnsemblMetazoa"/>
</dbReference>
<dbReference type="GO" id="GO:0035725">
    <property type="term" value="P:sodium ion transmembrane transport"/>
    <property type="evidence" value="ECO:0000318"/>
    <property type="project" value="GO_Central"/>
</dbReference>
<dbReference type="FunFam" id="1.10.287.770:FF:000001">
    <property type="entry name" value="Acid-sensing ion channel subunit 1"/>
    <property type="match status" value="1"/>
</dbReference>
<dbReference type="FunFam" id="2.60.470.10:FF:000004">
    <property type="entry name" value="Degenerin unc-8"/>
    <property type="match status" value="1"/>
</dbReference>
<dbReference type="Gene3D" id="2.60.470.10">
    <property type="entry name" value="Acid-sensing ion channels like domains"/>
    <property type="match status" value="1"/>
</dbReference>
<dbReference type="Gene3D" id="1.10.287.770">
    <property type="entry name" value="YojJ-like"/>
    <property type="match status" value="1"/>
</dbReference>
<dbReference type="InterPro" id="IPR004726">
    <property type="entry name" value="Deg-1"/>
</dbReference>
<dbReference type="InterPro" id="IPR001873">
    <property type="entry name" value="ENaC"/>
</dbReference>
<dbReference type="InterPro" id="IPR020903">
    <property type="entry name" value="ENaC_CS"/>
</dbReference>
<dbReference type="InterPro" id="IPR054001">
    <property type="entry name" value="Mec-4/10_cyt"/>
</dbReference>
<dbReference type="NCBIfam" id="TIGR00867">
    <property type="entry name" value="deg-1"/>
    <property type="match status" value="1"/>
</dbReference>
<dbReference type="PANTHER" id="PTHR11690">
    <property type="entry name" value="AMILORIDE-SENSITIVE SODIUM CHANNEL-RELATED"/>
    <property type="match status" value="1"/>
</dbReference>
<dbReference type="PANTHER" id="PTHR11690:SF267">
    <property type="entry name" value="DEGENERIN MEC-10"/>
    <property type="match status" value="1"/>
</dbReference>
<dbReference type="Pfam" id="PF00858">
    <property type="entry name" value="ASC"/>
    <property type="match status" value="1"/>
</dbReference>
<dbReference type="Pfam" id="PF22214">
    <property type="entry name" value="Mec-4_10_cyt"/>
    <property type="match status" value="1"/>
</dbReference>
<dbReference type="PRINTS" id="PR01078">
    <property type="entry name" value="AMINACHANNEL"/>
</dbReference>
<dbReference type="PROSITE" id="PS01206">
    <property type="entry name" value="ASC"/>
    <property type="match status" value="1"/>
</dbReference>
<organism>
    <name type="scientific">Caenorhabditis briggsae</name>
    <dbReference type="NCBI Taxonomy" id="6238"/>
    <lineage>
        <taxon>Eukaryota</taxon>
        <taxon>Metazoa</taxon>
        <taxon>Ecdysozoa</taxon>
        <taxon>Nematoda</taxon>
        <taxon>Chromadorea</taxon>
        <taxon>Rhabditida</taxon>
        <taxon>Rhabditina</taxon>
        <taxon>Rhabditomorpha</taxon>
        <taxon>Rhabditoidea</taxon>
        <taxon>Rhabditidae</taxon>
        <taxon>Peloderinae</taxon>
        <taxon>Caenorhabditis</taxon>
    </lineage>
</organism>
<evidence type="ECO:0000250" key="1">
    <source>
        <dbReference type="UniProtKB" id="P34886"/>
    </source>
</evidence>
<evidence type="ECO:0000255" key="2"/>
<evidence type="ECO:0000305" key="3"/>
<proteinExistence type="inferred from homology"/>
<feature type="chain" id="PRO_0000294930" description="Degenerin mec-10">
    <location>
        <begin position="1"/>
        <end position="724"/>
    </location>
</feature>
<feature type="topological domain" description="Cytoplasmic" evidence="2">
    <location>
        <begin position="1"/>
        <end position="125"/>
    </location>
</feature>
<feature type="transmembrane region" description="Helical" evidence="2">
    <location>
        <begin position="126"/>
        <end position="146"/>
    </location>
</feature>
<feature type="topological domain" description="Extracellular" evidence="2">
    <location>
        <begin position="147"/>
        <end position="684"/>
    </location>
</feature>
<feature type="transmembrane region" description="Helical" evidence="2">
    <location>
        <begin position="685"/>
        <end position="705"/>
    </location>
</feature>
<feature type="topological domain" description="Cytoplasmic" evidence="2">
    <location>
        <begin position="706"/>
        <end position="724"/>
    </location>
</feature>
<feature type="glycosylation site" description="N-linked (GlcNAc...) asparagine" evidence="2">
    <location>
        <position position="294"/>
    </location>
</feature>
<feature type="glycosylation site" description="N-linked (GlcNAc...) asparagine" evidence="2">
    <location>
        <position position="370"/>
    </location>
</feature>
<feature type="glycosylation site" description="N-linked (GlcNAc...) asparagine" evidence="2">
    <location>
        <position position="463"/>
    </location>
</feature>
<feature type="glycosylation site" description="N-linked (GlcNAc...) asparagine" evidence="2">
    <location>
        <position position="605"/>
    </location>
</feature>
<feature type="glycosylation site" description="N-linked (GlcNAc...) asparagine" evidence="2">
    <location>
        <position position="624"/>
    </location>
</feature>
<protein>
    <recommendedName>
        <fullName>Degenerin mec-10</fullName>
    </recommendedName>
    <alternativeName>
        <fullName>Mechanosensory abnormality protein 10</fullName>
    </alternativeName>
</protein>
<comment type="function">
    <text evidence="1">Amiloride-sensitive sodium channel subunit required for mechanosensory transduction (touch sensitivity). Negatively regulates the turning step of male mating behavior.</text>
</comment>
<comment type="subunit">
    <text evidence="1">The channel is probably composed of at least the mec-2, mec-4, mec-6 and mec-10 subunits.</text>
</comment>
<comment type="subcellular location">
    <subcellularLocation>
        <location evidence="1">Cell membrane</location>
        <topology evidence="1">Multi-pass membrane protein</topology>
    </subcellularLocation>
</comment>
<comment type="similarity">
    <text evidence="3">Belongs to the amiloride-sensitive sodium channel (TC 1.A.6) family.</text>
</comment>
<keyword id="KW-1003">Cell membrane</keyword>
<keyword id="KW-0325">Glycoprotein</keyword>
<keyword id="KW-0407">Ion channel</keyword>
<keyword id="KW-0406">Ion transport</keyword>
<keyword id="KW-0472">Membrane</keyword>
<keyword id="KW-1185">Reference proteome</keyword>
<keyword id="KW-0716">Sensory transduction</keyword>
<keyword id="KW-0915">Sodium</keyword>
<keyword id="KW-0894">Sodium channel</keyword>
<keyword id="KW-0739">Sodium transport</keyword>
<keyword id="KW-0812">Transmembrane</keyword>
<keyword id="KW-1133">Transmembrane helix</keyword>
<keyword id="KW-0813">Transport</keyword>